<organism>
    <name type="scientific">Pseudarthrobacter chlorophenolicus (strain ATCC 700700 / DSM 12829 / CIP 107037 / JCM 12360 / KCTC 9906 / NCIMB 13794 / A6)</name>
    <name type="common">Arthrobacter chlorophenolicus</name>
    <dbReference type="NCBI Taxonomy" id="452863"/>
    <lineage>
        <taxon>Bacteria</taxon>
        <taxon>Bacillati</taxon>
        <taxon>Actinomycetota</taxon>
        <taxon>Actinomycetes</taxon>
        <taxon>Micrococcales</taxon>
        <taxon>Micrococcaceae</taxon>
        <taxon>Pseudarthrobacter</taxon>
    </lineage>
</organism>
<evidence type="ECO:0000255" key="1">
    <source>
        <dbReference type="HAMAP-Rule" id="MF_01367"/>
    </source>
</evidence>
<evidence type="ECO:0000305" key="2"/>
<feature type="chain" id="PRO_1000166894" description="Large ribosomal subunit protein uL14">
    <location>
        <begin position="1"/>
        <end position="122"/>
    </location>
</feature>
<accession>B8HCZ6</accession>
<sequence>MIQQESRLKVADNTGAKEILTIRVLGGSGRRYAGIGDVIVATVKDAIPGGNVKKGDVVKAVIVRTKKERRRADGSYIKFDENAAVILKNDGDPRGTRIFGPVGRELRDKKFMKIVSLAPEVL</sequence>
<gene>
    <name evidence="1" type="primary">rplN</name>
    <name type="ordered locus">Achl_2677</name>
</gene>
<keyword id="KW-0687">Ribonucleoprotein</keyword>
<keyword id="KW-0689">Ribosomal protein</keyword>
<keyword id="KW-0694">RNA-binding</keyword>
<keyword id="KW-0699">rRNA-binding</keyword>
<reference key="1">
    <citation type="submission" date="2009-01" db="EMBL/GenBank/DDBJ databases">
        <title>Complete sequence of chromosome of Arthrobacter chlorophenolicus A6.</title>
        <authorList>
            <consortium name="US DOE Joint Genome Institute"/>
            <person name="Lucas S."/>
            <person name="Copeland A."/>
            <person name="Lapidus A."/>
            <person name="Glavina del Rio T."/>
            <person name="Tice H."/>
            <person name="Bruce D."/>
            <person name="Goodwin L."/>
            <person name="Pitluck S."/>
            <person name="Goltsman E."/>
            <person name="Clum A."/>
            <person name="Larimer F."/>
            <person name="Land M."/>
            <person name="Hauser L."/>
            <person name="Kyrpides N."/>
            <person name="Mikhailova N."/>
            <person name="Jansson J."/>
            <person name="Richardson P."/>
        </authorList>
    </citation>
    <scope>NUCLEOTIDE SEQUENCE [LARGE SCALE GENOMIC DNA]</scope>
    <source>
        <strain>ATCC 700700 / DSM 12829 / CIP 107037 / JCM 12360 / KCTC 9906 / NCIMB 13794 / A6</strain>
    </source>
</reference>
<name>RL14_PSECP</name>
<comment type="function">
    <text evidence="1">Binds to 23S rRNA. Forms part of two intersubunit bridges in the 70S ribosome.</text>
</comment>
<comment type="subunit">
    <text evidence="1">Part of the 50S ribosomal subunit. Forms a cluster with proteins L3 and L19. In the 70S ribosome, L14 and L19 interact and together make contacts with the 16S rRNA in bridges B5 and B8.</text>
</comment>
<comment type="similarity">
    <text evidence="1">Belongs to the universal ribosomal protein uL14 family.</text>
</comment>
<dbReference type="EMBL" id="CP001341">
    <property type="protein sequence ID" value="ACL40642.1"/>
    <property type="molecule type" value="Genomic_DNA"/>
</dbReference>
<dbReference type="RefSeq" id="WP_003803789.1">
    <property type="nucleotide sequence ID" value="NC_011886.1"/>
</dbReference>
<dbReference type="SMR" id="B8HCZ6"/>
<dbReference type="STRING" id="452863.Achl_2677"/>
<dbReference type="GeneID" id="97301782"/>
<dbReference type="KEGG" id="ach:Achl_2677"/>
<dbReference type="eggNOG" id="COG0093">
    <property type="taxonomic scope" value="Bacteria"/>
</dbReference>
<dbReference type="HOGENOM" id="CLU_095071_2_1_11"/>
<dbReference type="OrthoDB" id="9806379at2"/>
<dbReference type="Proteomes" id="UP000002505">
    <property type="component" value="Chromosome"/>
</dbReference>
<dbReference type="GO" id="GO:0022625">
    <property type="term" value="C:cytosolic large ribosomal subunit"/>
    <property type="evidence" value="ECO:0007669"/>
    <property type="project" value="TreeGrafter"/>
</dbReference>
<dbReference type="GO" id="GO:0070180">
    <property type="term" value="F:large ribosomal subunit rRNA binding"/>
    <property type="evidence" value="ECO:0007669"/>
    <property type="project" value="TreeGrafter"/>
</dbReference>
<dbReference type="GO" id="GO:0003735">
    <property type="term" value="F:structural constituent of ribosome"/>
    <property type="evidence" value="ECO:0007669"/>
    <property type="project" value="InterPro"/>
</dbReference>
<dbReference type="GO" id="GO:0006412">
    <property type="term" value="P:translation"/>
    <property type="evidence" value="ECO:0007669"/>
    <property type="project" value="UniProtKB-UniRule"/>
</dbReference>
<dbReference type="CDD" id="cd00337">
    <property type="entry name" value="Ribosomal_uL14"/>
    <property type="match status" value="1"/>
</dbReference>
<dbReference type="FunFam" id="2.40.150.20:FF:000001">
    <property type="entry name" value="50S ribosomal protein L14"/>
    <property type="match status" value="1"/>
</dbReference>
<dbReference type="Gene3D" id="2.40.150.20">
    <property type="entry name" value="Ribosomal protein L14"/>
    <property type="match status" value="1"/>
</dbReference>
<dbReference type="HAMAP" id="MF_01367">
    <property type="entry name" value="Ribosomal_uL14"/>
    <property type="match status" value="1"/>
</dbReference>
<dbReference type="InterPro" id="IPR000218">
    <property type="entry name" value="Ribosomal_uL14"/>
</dbReference>
<dbReference type="InterPro" id="IPR005745">
    <property type="entry name" value="Ribosomal_uL14_bac-type"/>
</dbReference>
<dbReference type="InterPro" id="IPR019972">
    <property type="entry name" value="Ribosomal_uL14_CS"/>
</dbReference>
<dbReference type="InterPro" id="IPR036853">
    <property type="entry name" value="Ribosomal_uL14_sf"/>
</dbReference>
<dbReference type="NCBIfam" id="TIGR01067">
    <property type="entry name" value="rplN_bact"/>
    <property type="match status" value="1"/>
</dbReference>
<dbReference type="PANTHER" id="PTHR11761">
    <property type="entry name" value="50S/60S RIBOSOMAL PROTEIN L14/L23"/>
    <property type="match status" value="1"/>
</dbReference>
<dbReference type="PANTHER" id="PTHR11761:SF3">
    <property type="entry name" value="LARGE RIBOSOMAL SUBUNIT PROTEIN UL14M"/>
    <property type="match status" value="1"/>
</dbReference>
<dbReference type="Pfam" id="PF00238">
    <property type="entry name" value="Ribosomal_L14"/>
    <property type="match status" value="1"/>
</dbReference>
<dbReference type="SMART" id="SM01374">
    <property type="entry name" value="Ribosomal_L14"/>
    <property type="match status" value="1"/>
</dbReference>
<dbReference type="SUPFAM" id="SSF50193">
    <property type="entry name" value="Ribosomal protein L14"/>
    <property type="match status" value="1"/>
</dbReference>
<dbReference type="PROSITE" id="PS00049">
    <property type="entry name" value="RIBOSOMAL_L14"/>
    <property type="match status" value="1"/>
</dbReference>
<protein>
    <recommendedName>
        <fullName evidence="1">Large ribosomal subunit protein uL14</fullName>
    </recommendedName>
    <alternativeName>
        <fullName evidence="2">50S ribosomal protein L14</fullName>
    </alternativeName>
</protein>
<proteinExistence type="inferred from homology"/>